<reference key="1">
    <citation type="journal article" date="2010" name="Appl. Environ. Microbiol.">
        <title>The genome sequence of Psychrobacter arcticus 273-4, a psychroactive Siberian permafrost bacterium, reveals mechanisms for adaptation to low-temperature growth.</title>
        <authorList>
            <person name="Ayala-del-Rio H.L."/>
            <person name="Chain P.S."/>
            <person name="Grzymski J.J."/>
            <person name="Ponder M.A."/>
            <person name="Ivanova N."/>
            <person name="Bergholz P.W."/>
            <person name="Di Bartolo G."/>
            <person name="Hauser L."/>
            <person name="Land M."/>
            <person name="Bakermans C."/>
            <person name="Rodrigues D."/>
            <person name="Klappenbach J."/>
            <person name="Zarka D."/>
            <person name="Larimer F."/>
            <person name="Richardson P."/>
            <person name="Murray A."/>
            <person name="Thomashow M."/>
            <person name="Tiedje J.M."/>
        </authorList>
    </citation>
    <scope>NUCLEOTIDE SEQUENCE [LARGE SCALE GENOMIC DNA]</scope>
    <source>
        <strain>DSM 17307 / VKM B-2377 / 273-4</strain>
    </source>
</reference>
<dbReference type="EC" id="2.7.7.4" evidence="1"/>
<dbReference type="EMBL" id="CP000082">
    <property type="protein sequence ID" value="AAZ18921.1"/>
    <property type="status" value="ALT_INIT"/>
    <property type="molecule type" value="Genomic_DNA"/>
</dbReference>
<dbReference type="RefSeq" id="WP_041758005.1">
    <property type="nucleotide sequence ID" value="NC_007204.1"/>
</dbReference>
<dbReference type="SMR" id="Q4FST7"/>
<dbReference type="STRING" id="259536.Psyc_1069"/>
<dbReference type="KEGG" id="par:Psyc_1069"/>
<dbReference type="eggNOG" id="COG2046">
    <property type="taxonomic scope" value="Bacteria"/>
</dbReference>
<dbReference type="HOGENOM" id="CLU_022950_1_1_6"/>
<dbReference type="OrthoDB" id="9804504at2"/>
<dbReference type="UniPathway" id="UPA00140">
    <property type="reaction ID" value="UER00204"/>
</dbReference>
<dbReference type="Proteomes" id="UP000000546">
    <property type="component" value="Chromosome"/>
</dbReference>
<dbReference type="GO" id="GO:0005524">
    <property type="term" value="F:ATP binding"/>
    <property type="evidence" value="ECO:0007669"/>
    <property type="project" value="UniProtKB-KW"/>
</dbReference>
<dbReference type="GO" id="GO:0004781">
    <property type="term" value="F:sulfate adenylyltransferase (ATP) activity"/>
    <property type="evidence" value="ECO:0007669"/>
    <property type="project" value="UniProtKB-UniRule"/>
</dbReference>
<dbReference type="GO" id="GO:0070814">
    <property type="term" value="P:hydrogen sulfide biosynthetic process"/>
    <property type="evidence" value="ECO:0007669"/>
    <property type="project" value="UniProtKB-UniRule"/>
</dbReference>
<dbReference type="GO" id="GO:0000103">
    <property type="term" value="P:sulfate assimilation"/>
    <property type="evidence" value="ECO:0007669"/>
    <property type="project" value="UniProtKB-UniRule"/>
</dbReference>
<dbReference type="CDD" id="cd00517">
    <property type="entry name" value="ATPS"/>
    <property type="match status" value="1"/>
</dbReference>
<dbReference type="Gene3D" id="3.40.50.620">
    <property type="entry name" value="HUPs"/>
    <property type="match status" value="1"/>
</dbReference>
<dbReference type="Gene3D" id="3.10.400.10">
    <property type="entry name" value="Sulfate adenylyltransferase"/>
    <property type="match status" value="1"/>
</dbReference>
<dbReference type="HAMAP" id="MF_00066">
    <property type="entry name" value="Sulf_adenylyltr"/>
    <property type="match status" value="1"/>
</dbReference>
<dbReference type="InterPro" id="IPR025980">
    <property type="entry name" value="ATP-Sase_PUA-like_dom"/>
</dbReference>
<dbReference type="InterPro" id="IPR015947">
    <property type="entry name" value="PUA-like_sf"/>
</dbReference>
<dbReference type="InterPro" id="IPR014729">
    <property type="entry name" value="Rossmann-like_a/b/a_fold"/>
</dbReference>
<dbReference type="InterPro" id="IPR020792">
    <property type="entry name" value="SO4_adenylyltransferase_pro"/>
</dbReference>
<dbReference type="InterPro" id="IPR024951">
    <property type="entry name" value="Sulfurylase_cat_dom"/>
</dbReference>
<dbReference type="InterPro" id="IPR002650">
    <property type="entry name" value="Sulphate_adenylyltransferase"/>
</dbReference>
<dbReference type="NCBIfam" id="NF003166">
    <property type="entry name" value="PRK04149.1"/>
    <property type="match status" value="1"/>
</dbReference>
<dbReference type="NCBIfam" id="TIGR00339">
    <property type="entry name" value="sopT"/>
    <property type="match status" value="1"/>
</dbReference>
<dbReference type="PANTHER" id="PTHR43509">
    <property type="match status" value="1"/>
</dbReference>
<dbReference type="PANTHER" id="PTHR43509:SF1">
    <property type="entry name" value="SULFATE ADENYLYLTRANSFERASE"/>
    <property type="match status" value="1"/>
</dbReference>
<dbReference type="Pfam" id="PF01747">
    <property type="entry name" value="ATP-sulfurylase"/>
    <property type="match status" value="1"/>
</dbReference>
<dbReference type="Pfam" id="PF14306">
    <property type="entry name" value="PUA_2"/>
    <property type="match status" value="1"/>
</dbReference>
<dbReference type="SUPFAM" id="SSF52374">
    <property type="entry name" value="Nucleotidylyl transferase"/>
    <property type="match status" value="1"/>
</dbReference>
<dbReference type="SUPFAM" id="SSF88697">
    <property type="entry name" value="PUA domain-like"/>
    <property type="match status" value="1"/>
</dbReference>
<organism>
    <name type="scientific">Psychrobacter arcticus (strain DSM 17307 / VKM B-2377 / 273-4)</name>
    <dbReference type="NCBI Taxonomy" id="259536"/>
    <lineage>
        <taxon>Bacteria</taxon>
        <taxon>Pseudomonadati</taxon>
        <taxon>Pseudomonadota</taxon>
        <taxon>Gammaproteobacteria</taxon>
        <taxon>Moraxellales</taxon>
        <taxon>Moraxellaceae</taxon>
        <taxon>Psychrobacter</taxon>
    </lineage>
</organism>
<name>SAT_PSYA2</name>
<comment type="catalytic activity">
    <reaction evidence="1">
        <text>sulfate + ATP + H(+) = adenosine 5'-phosphosulfate + diphosphate</text>
        <dbReference type="Rhea" id="RHEA:18133"/>
        <dbReference type="ChEBI" id="CHEBI:15378"/>
        <dbReference type="ChEBI" id="CHEBI:16189"/>
        <dbReference type="ChEBI" id="CHEBI:30616"/>
        <dbReference type="ChEBI" id="CHEBI:33019"/>
        <dbReference type="ChEBI" id="CHEBI:58243"/>
        <dbReference type="EC" id="2.7.7.4"/>
    </reaction>
</comment>
<comment type="pathway">
    <text evidence="1">Sulfur metabolism; hydrogen sulfide biosynthesis; sulfite from sulfate: step 1/3.</text>
</comment>
<comment type="similarity">
    <text evidence="1">Belongs to the sulfate adenylyltransferase family.</text>
</comment>
<comment type="sequence caution" evidence="3">
    <conflict type="erroneous initiation">
        <sequence resource="EMBL-CDS" id="AAZ18921"/>
    </conflict>
</comment>
<protein>
    <recommendedName>
        <fullName evidence="1">Sulfate adenylyltransferase</fullName>
        <ecNumber evidence="1">2.7.7.4</ecNumber>
    </recommendedName>
    <alternativeName>
        <fullName evidence="1">ATP-sulfurylase</fullName>
    </alternativeName>
    <alternativeName>
        <fullName evidence="1">Sulfate adenylate transferase</fullName>
        <shortName evidence="1">SAT</shortName>
    </alternativeName>
</protein>
<proteinExistence type="inferred from homology"/>
<gene>
    <name evidence="1" type="primary">sat</name>
    <name type="ordered locus">Psyc_1069</name>
</gene>
<keyword id="KW-0067">ATP-binding</keyword>
<keyword id="KW-0547">Nucleotide-binding</keyword>
<keyword id="KW-0548">Nucleotidyltransferase</keyword>
<keyword id="KW-1185">Reference proteome</keyword>
<keyword id="KW-0808">Transferase</keyword>
<feature type="chain" id="PRO_0000340627" description="Sulfate adenylyltransferase">
    <location>
        <begin position="1"/>
        <end position="417"/>
    </location>
</feature>
<feature type="region of interest" description="Disordered" evidence="2">
    <location>
        <begin position="1"/>
        <end position="20"/>
    </location>
</feature>
<feature type="compositionally biased region" description="Polar residues" evidence="2">
    <location>
        <begin position="1"/>
        <end position="10"/>
    </location>
</feature>
<evidence type="ECO:0000255" key="1">
    <source>
        <dbReference type="HAMAP-Rule" id="MF_00066"/>
    </source>
</evidence>
<evidence type="ECO:0000256" key="2">
    <source>
        <dbReference type="SAM" id="MobiDB-lite"/>
    </source>
</evidence>
<evidence type="ECO:0000305" key="3"/>
<sequence>MTSITANQKPSKLVPPHGSPELKPLLLNGDALNQALKLASTLPTITLSSRERGDLIMFGIGGFTPLNGFMNQADWQGVVDNMRLQSGDNAGLFWPIPITLSAPKATADSLNAGDKVALVAQDGEIMGILTVEETYTIDKEHECQQVFTTTDPEHPGVQQVLEQSEVNIAGSVEVLSEGEFPTLYPEIYKTPAETREILDNKGWQTVAAFQTRNPMHRSHEYLAKIAIEICDGVLIHSLLGALKPGDIPADVRQEAIKSLIDNYFRQDTVIQAGYPLDMRYAGPREALLHALFRQNYGCSHLIVGRDHAGVGDYYGAFDAQTIFDHVGKDDLITQPLKIGWTFWCNACNAMASDKTCPHDASEHVKVSGTKLRKALSEDEDVPDNFSRPEVLQILRDYYAGIAFDERAEVKLVGASAV</sequence>
<accession>Q4FST7</accession>